<comment type="function">
    <text evidence="2 3">Involved in the transformation of 5-formyl tetrahydromethanopterin (5-formyl-H(4)MPT) to methanofuran (MFR) and formate via the intermediate formylmethanofuran (formyl-MFR). Catalyzes the transfer of a formyl group from 5-formyl-H(4)MPT to MFR to produce tetrahydromethanopterin (H(4)MPT) and formyl-MFR, which is then hydrolyzed to formate and MFR.</text>
</comment>
<comment type="catalytic activity">
    <reaction evidence="1 2 3">
        <text>N-formylmethanofuran + 5,6,7,8-tetrahydromethanopterin + H(+) = N(5)-formyl-5,6,7,8-tetrahydromethanopterin + methanofuran</text>
        <dbReference type="Rhea" id="RHEA:18061"/>
        <dbReference type="ChEBI" id="CHEBI:15378"/>
        <dbReference type="ChEBI" id="CHEBI:57727"/>
        <dbReference type="ChEBI" id="CHEBI:58018"/>
        <dbReference type="ChEBI" id="CHEBI:58103"/>
        <dbReference type="ChEBI" id="CHEBI:58151"/>
        <dbReference type="EC" id="2.3.1.101"/>
    </reaction>
</comment>
<comment type="biophysicochemical properties">
    <kinetics>
        <KM evidence="2">30 uM for H(4)MPT</KM>
        <KM evidence="2">50 uM for formyl-MFR</KM>
        <Vmax evidence="2">80.0 umol/min/mg enzyme</Vmax>
    </kinetics>
    <phDependence>
        <text evidence="2">Optimum pH is 7.</text>
    </phDependence>
</comment>
<comment type="pathway">
    <text evidence="1">One-carbon metabolism; formaldehyde degradation; formate from formaldehyde (H(4)MPT route): step 4/5.</text>
</comment>
<comment type="subunit">
    <text evidence="1 2 3">Homotetramer (By similarity). Octaheteromer. Part of the formyltransferase/hydrolase complex fhc; composed of FhcA, FhcB, FhcC and FhcD (PubMed:11532013, PubMed:12123819).</text>
</comment>
<comment type="subcellular location">
    <subcellularLocation>
        <location evidence="1">Cytoplasm</location>
    </subcellularLocation>
</comment>
<comment type="similarity">
    <text evidence="1">Belongs to the FTR family.</text>
</comment>
<name>FHCD_METEA</name>
<gene>
    <name evidence="1" type="primary">ffsA</name>
    <name evidence="6" type="synonym">fhcD</name>
    <name type="ordered locus">MexAM1_META1p1756</name>
</gene>
<dbReference type="EC" id="2.3.1.101" evidence="1 2"/>
<dbReference type="EMBL" id="AF032114">
    <property type="protein sequence ID" value="AAC26972.1"/>
    <property type="molecule type" value="Genomic_DNA"/>
</dbReference>
<dbReference type="EMBL" id="CP001510">
    <property type="protein sequence ID" value="ACS39600.1"/>
    <property type="molecule type" value="Genomic_DNA"/>
</dbReference>
<dbReference type="PIR" id="T45153">
    <property type="entry name" value="T45153"/>
</dbReference>
<dbReference type="RefSeq" id="WP_003597588.1">
    <property type="nucleotide sequence ID" value="NC_012808.1"/>
</dbReference>
<dbReference type="SMR" id="Q49118"/>
<dbReference type="STRING" id="272630.MexAM1_META1p1756"/>
<dbReference type="KEGG" id="mea:Mex_1p1756"/>
<dbReference type="eggNOG" id="COG2037">
    <property type="taxonomic scope" value="Bacteria"/>
</dbReference>
<dbReference type="HOGENOM" id="CLU_081314_0_0_5"/>
<dbReference type="OrthoDB" id="8841169at2"/>
<dbReference type="BioCyc" id="MetaCyc:MONOMER-4065"/>
<dbReference type="UniPathway" id="UPA00562">
    <property type="reaction ID" value="UER00704"/>
</dbReference>
<dbReference type="Proteomes" id="UP000009081">
    <property type="component" value="Chromosome"/>
</dbReference>
<dbReference type="GO" id="GO:0005737">
    <property type="term" value="C:cytoplasm"/>
    <property type="evidence" value="ECO:0007669"/>
    <property type="project" value="UniProtKB-SubCell"/>
</dbReference>
<dbReference type="GO" id="GO:0030270">
    <property type="term" value="F:formylmethanofuran-tetrahydromethanopterin N-formyltransferase activity"/>
    <property type="evidence" value="ECO:0000314"/>
    <property type="project" value="UniProtKB"/>
</dbReference>
<dbReference type="GO" id="GO:0046294">
    <property type="term" value="P:formaldehyde catabolic process"/>
    <property type="evidence" value="ECO:0007669"/>
    <property type="project" value="UniProtKB-UniRule"/>
</dbReference>
<dbReference type="GO" id="GO:0006730">
    <property type="term" value="P:one-carbon metabolic process"/>
    <property type="evidence" value="ECO:0000314"/>
    <property type="project" value="UniProtKB"/>
</dbReference>
<dbReference type="FunFam" id="3.30.70.520:FF:000001">
    <property type="entry name" value="Formylmethanofuran--tetrahydromethanopterin formyltransferase"/>
    <property type="match status" value="1"/>
</dbReference>
<dbReference type="FunFam" id="3.30.70.520:FF:000002">
    <property type="entry name" value="Formylmethanofuran--tetrahydromethanopterin formyltransferase"/>
    <property type="match status" value="1"/>
</dbReference>
<dbReference type="Gene3D" id="3.30.70.520">
    <property type="match status" value="2"/>
</dbReference>
<dbReference type="HAMAP" id="MF_00579">
    <property type="entry name" value="FTR"/>
    <property type="match status" value="1"/>
</dbReference>
<dbReference type="InterPro" id="IPR014053">
    <property type="entry name" value="ForMFR_H4MPT_ForTrfase"/>
</dbReference>
<dbReference type="InterPro" id="IPR002770">
    <property type="entry name" value="ForMFR_H4MPT_ForTrfase_C"/>
</dbReference>
<dbReference type="InterPro" id="IPR023447">
    <property type="entry name" value="ForMFR_H4MPT_ForTrfase_fd-like"/>
</dbReference>
<dbReference type="InterPro" id="IPR022667">
    <property type="entry name" value="ForMFR_H4MPT_ForTrfase_N"/>
</dbReference>
<dbReference type="NCBIfam" id="TIGR03119">
    <property type="entry name" value="one_C_fhcD"/>
    <property type="match status" value="1"/>
</dbReference>
<dbReference type="NCBIfam" id="NF002554">
    <property type="entry name" value="PRK02114.1"/>
    <property type="match status" value="1"/>
</dbReference>
<dbReference type="Pfam" id="PF01913">
    <property type="entry name" value="FTR"/>
    <property type="match status" value="1"/>
</dbReference>
<dbReference type="Pfam" id="PF02741">
    <property type="entry name" value="FTR_C"/>
    <property type="match status" value="1"/>
</dbReference>
<dbReference type="PIRSF" id="PIRSF006414">
    <property type="entry name" value="Ftr_formyl_trnsf"/>
    <property type="match status" value="1"/>
</dbReference>
<dbReference type="SUPFAM" id="SSF55112">
    <property type="entry name" value="Formylmethanofuran:tetrahydromethanopterin formyltransferase"/>
    <property type="match status" value="2"/>
</dbReference>
<reference key="1">
    <citation type="journal article" date="1998" name="Science">
        <title>C1 transfer enzymes and coenzymes linking methylotrophic bacteria and methanogenic Archaea.</title>
        <authorList>
            <person name="Chistoserdova L.V."/>
            <person name="Vorholt J.A."/>
            <person name="Thauer R.K."/>
            <person name="Lidstrom M.E."/>
        </authorList>
    </citation>
    <scope>NUCLEOTIDE SEQUENCE [GENOMIC DNA]</scope>
</reference>
<reference key="2">
    <citation type="journal article" date="2009" name="PLoS ONE">
        <title>Methylobacterium genome sequences: a reference blueprint to investigate microbial metabolism of C1 compounds from natural and industrial sources.</title>
        <authorList>
            <person name="Vuilleumier S."/>
            <person name="Chistoserdova L."/>
            <person name="Lee M.-C."/>
            <person name="Bringel F."/>
            <person name="Lajus A."/>
            <person name="Zhou Y."/>
            <person name="Gourion B."/>
            <person name="Barbe V."/>
            <person name="Chang J."/>
            <person name="Cruveiller S."/>
            <person name="Dossat C."/>
            <person name="Gillett W."/>
            <person name="Gruffaz C."/>
            <person name="Haugen E."/>
            <person name="Hourcade E."/>
            <person name="Levy R."/>
            <person name="Mangenot S."/>
            <person name="Muller E."/>
            <person name="Nadalig T."/>
            <person name="Pagni M."/>
            <person name="Penny C."/>
            <person name="Peyraud R."/>
            <person name="Robinson D.G."/>
            <person name="Roche D."/>
            <person name="Rouy Z."/>
            <person name="Saenampechek C."/>
            <person name="Salvignol G."/>
            <person name="Vallenet D."/>
            <person name="Wu Z."/>
            <person name="Marx C.J."/>
            <person name="Vorholt J.A."/>
            <person name="Olson M.V."/>
            <person name="Kaul R."/>
            <person name="Weissenbach J."/>
            <person name="Medigue C."/>
            <person name="Lidstrom M.E."/>
        </authorList>
    </citation>
    <scope>NUCLEOTIDE SEQUENCE [LARGE SCALE GENOMIC DNA]</scope>
    <source>
        <strain>ATCC 14718 / DSM 1338 / JCM 2805 / NCIMB 9133 / AM1</strain>
    </source>
</reference>
<reference key="3">
    <citation type="journal article" date="2001" name="Eur. J. Biochem.">
        <title>Characterization of the formyltransferase from Methylobacterium extorquens AM1.</title>
        <authorList>
            <person name="Pomper B.K."/>
            <person name="Vorholt J.A."/>
        </authorList>
    </citation>
    <scope>PROTEIN SEQUENCE OF 2-16</scope>
    <scope>FUNCTION AS A FORMYLTRANSFERASE</scope>
    <scope>CATALYTIC ACTIVITY</scope>
    <scope>BIOPHYSICOCHEMICAL PROPERTIES</scope>
    <scope>SUBUNIT</scope>
</reference>
<reference key="4">
    <citation type="journal article" date="2002" name="FEBS Lett.">
        <title>Generation of formate by the formyltransferase/hydrolase complex (Fhc) from Methylobacterium extorquens AM1.</title>
        <authorList>
            <person name="Pomper B.K."/>
            <person name="Saurel O."/>
            <person name="Milon A."/>
            <person name="Vorholt J.A."/>
        </authorList>
    </citation>
    <scope>FUNCTION</scope>
    <scope>CATALYTIC ACTIVITY</scope>
    <scope>SUBUNIT</scope>
</reference>
<organism>
    <name type="scientific">Methylorubrum extorquens (strain ATCC 14718 / DSM 1338 / JCM 2805 / NCIMB 9133 / AM1)</name>
    <name type="common">Methylobacterium extorquens</name>
    <dbReference type="NCBI Taxonomy" id="272630"/>
    <lineage>
        <taxon>Bacteria</taxon>
        <taxon>Pseudomonadati</taxon>
        <taxon>Pseudomonadota</taxon>
        <taxon>Alphaproteobacteria</taxon>
        <taxon>Hyphomicrobiales</taxon>
        <taxon>Methylobacteriaceae</taxon>
        <taxon>Methylorubrum</taxon>
    </lineage>
</organism>
<evidence type="ECO:0000255" key="1">
    <source>
        <dbReference type="HAMAP-Rule" id="MF_00579"/>
    </source>
</evidence>
<evidence type="ECO:0000269" key="2">
    <source>
    </source>
</evidence>
<evidence type="ECO:0000269" key="3">
    <source>
    </source>
</evidence>
<evidence type="ECO:0000303" key="4">
    <source>
    </source>
</evidence>
<evidence type="ECO:0000303" key="5">
    <source>
    </source>
</evidence>
<evidence type="ECO:0000303" key="6">
    <source>
    </source>
</evidence>
<feature type="initiator methionine" description="Removed" evidence="2">
    <location>
        <position position="1"/>
    </location>
</feature>
<feature type="chain" id="PRO_0000138124" description="Formyltransferase/hydrolase complex subunit D">
    <location>
        <begin position="2"/>
        <end position="311"/>
    </location>
</feature>
<proteinExistence type="evidence at protein level"/>
<sequence length="311" mass="32374">MSDFTLNGIKVEDTFAEAFDVAGTAIIVTNDTPKWAMIAATVMTGFATSVIGCGAEAGIDAELSPDETPDGRPGVRILLFGFEPNGLKDQLLKRVGQCILTCPGTACFAGVEGPTKIKLGGAIRYFGDGFAVAKRLPDHEGKMRRYWRIPVMDGEFLCEDSVRAVDGAVGGGNLLFLGRKHADTLIVAEIAVEAAKAIPGAILPFPGGIVRSGSKVGGRTKGMMASTNDAYCPTLKGRAGSALPPECGVVLEIVIDALTSAAVAESMRAALHAATEIGAQHGLVAVTAGNYGGNLGRHHYHLRDLLEKPAA</sequence>
<protein>
    <recommendedName>
        <fullName evidence="5">Formyltransferase/hydrolase complex subunit D</fullName>
        <shortName evidence="5">Ftr complex</shortName>
        <ecNumber evidence="1 2">2.3.1.101</ecNumber>
    </recommendedName>
    <alternativeName>
        <fullName evidence="1 4">Formylmethanofuran--tetrahydromethanopterin formyltransferase</fullName>
        <shortName evidence="1 4">Ftr</shortName>
    </alternativeName>
    <alternativeName>
        <fullName evidence="1">H4MPT formyltransferase</fullName>
    </alternativeName>
</protein>
<keyword id="KW-0012">Acyltransferase</keyword>
<keyword id="KW-0963">Cytoplasm</keyword>
<keyword id="KW-0903">Direct protein sequencing</keyword>
<keyword id="KW-0554">One-carbon metabolism</keyword>
<keyword id="KW-1185">Reference proteome</keyword>
<keyword id="KW-0808">Transferase</keyword>
<accession>Q49118</accession>
<accession>C5B136</accession>